<reference key="1">
    <citation type="journal article" date="2005" name="Nucleic Acids Res.">
        <title>The genome sequence of Salmonella enterica serovar Choleraesuis, a highly invasive and resistant zoonotic pathogen.</title>
        <authorList>
            <person name="Chiu C.-H."/>
            <person name="Tang P."/>
            <person name="Chu C."/>
            <person name="Hu S."/>
            <person name="Bao Q."/>
            <person name="Yu J."/>
            <person name="Chou Y.-Y."/>
            <person name="Wang H.-S."/>
            <person name="Lee Y.-S."/>
        </authorList>
    </citation>
    <scope>NUCLEOTIDE SEQUENCE [LARGE SCALE GENOMIC DNA]</scope>
    <source>
        <strain>SC-B67</strain>
    </source>
</reference>
<evidence type="ECO:0000255" key="1">
    <source>
        <dbReference type="HAMAP-Rule" id="MF_00131"/>
    </source>
</evidence>
<sequence length="268" mass="28688">MERYENLFAQLNDRREGAFVPFVTLGDPGIEQSLKIIDTLIDSGADALELGVPFSDPLADGPTIQNANLRAFAAGVTPAQCFEMLALIREKHPTIPIGLLMYANLVFNNGIDAFYARCEQVGVDSVLVADVPVEESAPFRQAALRHNIAPIFICPPNADDDLLRQVASYGRGYTYLLSRSGVTGAENRGALPLHHLIEKLKEYHAAPALQGFGISSPEQVSAAVRAGAAGAISGSAIVKIIEKNLASPEQMLAELRSFVSAMKAASRA</sequence>
<organism>
    <name type="scientific">Salmonella choleraesuis (strain SC-B67)</name>
    <dbReference type="NCBI Taxonomy" id="321314"/>
    <lineage>
        <taxon>Bacteria</taxon>
        <taxon>Pseudomonadati</taxon>
        <taxon>Pseudomonadota</taxon>
        <taxon>Gammaproteobacteria</taxon>
        <taxon>Enterobacterales</taxon>
        <taxon>Enterobacteriaceae</taxon>
        <taxon>Salmonella</taxon>
    </lineage>
</organism>
<keyword id="KW-0028">Amino-acid biosynthesis</keyword>
<keyword id="KW-0057">Aromatic amino acid biosynthesis</keyword>
<keyword id="KW-0456">Lyase</keyword>
<keyword id="KW-0822">Tryptophan biosynthesis</keyword>
<protein>
    <recommendedName>
        <fullName evidence="1">Tryptophan synthase alpha chain</fullName>
        <ecNumber evidence="1">4.2.1.20</ecNumber>
    </recommendedName>
</protein>
<proteinExistence type="inferred from homology"/>
<gene>
    <name evidence="1" type="primary">trpA</name>
    <name type="ordered locus">SCH_1723</name>
</gene>
<accession>Q57NT2</accession>
<name>TRPA_SALCH</name>
<comment type="function">
    <text evidence="1">The alpha subunit is responsible for the aldol cleavage of indoleglycerol phosphate to indole and glyceraldehyde 3-phosphate.</text>
</comment>
<comment type="catalytic activity">
    <reaction evidence="1">
        <text>(1S,2R)-1-C-(indol-3-yl)glycerol 3-phosphate + L-serine = D-glyceraldehyde 3-phosphate + L-tryptophan + H2O</text>
        <dbReference type="Rhea" id="RHEA:10532"/>
        <dbReference type="ChEBI" id="CHEBI:15377"/>
        <dbReference type="ChEBI" id="CHEBI:33384"/>
        <dbReference type="ChEBI" id="CHEBI:57912"/>
        <dbReference type="ChEBI" id="CHEBI:58866"/>
        <dbReference type="ChEBI" id="CHEBI:59776"/>
        <dbReference type="EC" id="4.2.1.20"/>
    </reaction>
</comment>
<comment type="pathway">
    <text evidence="1">Amino-acid biosynthesis; L-tryptophan biosynthesis; L-tryptophan from chorismate: step 5/5.</text>
</comment>
<comment type="subunit">
    <text evidence="1">Tetramer of two alpha and two beta chains.</text>
</comment>
<comment type="similarity">
    <text evidence="1">Belongs to the TrpA family.</text>
</comment>
<feature type="chain" id="PRO_0000098836" description="Tryptophan synthase alpha chain">
    <location>
        <begin position="1"/>
        <end position="268"/>
    </location>
</feature>
<feature type="active site" description="Proton acceptor" evidence="1">
    <location>
        <position position="49"/>
    </location>
</feature>
<feature type="active site" description="Proton acceptor" evidence="1">
    <location>
        <position position="60"/>
    </location>
</feature>
<dbReference type="EC" id="4.2.1.20" evidence="1"/>
<dbReference type="EMBL" id="AE017220">
    <property type="protein sequence ID" value="AAX65629.1"/>
    <property type="molecule type" value="Genomic_DNA"/>
</dbReference>
<dbReference type="RefSeq" id="WP_000443036.1">
    <property type="nucleotide sequence ID" value="NC_006905.1"/>
</dbReference>
<dbReference type="SMR" id="Q57NT2"/>
<dbReference type="KEGG" id="sec:SCH_1723"/>
<dbReference type="HOGENOM" id="CLU_016734_0_4_6"/>
<dbReference type="UniPathway" id="UPA00035">
    <property type="reaction ID" value="UER00044"/>
</dbReference>
<dbReference type="Proteomes" id="UP000000538">
    <property type="component" value="Chromosome"/>
</dbReference>
<dbReference type="GO" id="GO:0005829">
    <property type="term" value="C:cytosol"/>
    <property type="evidence" value="ECO:0007669"/>
    <property type="project" value="TreeGrafter"/>
</dbReference>
<dbReference type="GO" id="GO:0004834">
    <property type="term" value="F:tryptophan synthase activity"/>
    <property type="evidence" value="ECO:0007669"/>
    <property type="project" value="UniProtKB-UniRule"/>
</dbReference>
<dbReference type="CDD" id="cd04724">
    <property type="entry name" value="Tryptophan_synthase_alpha"/>
    <property type="match status" value="1"/>
</dbReference>
<dbReference type="FunFam" id="3.20.20.70:FF:000037">
    <property type="entry name" value="Tryptophan synthase alpha chain"/>
    <property type="match status" value="1"/>
</dbReference>
<dbReference type="Gene3D" id="3.20.20.70">
    <property type="entry name" value="Aldolase class I"/>
    <property type="match status" value="1"/>
</dbReference>
<dbReference type="HAMAP" id="MF_00131">
    <property type="entry name" value="Trp_synth_alpha"/>
    <property type="match status" value="1"/>
</dbReference>
<dbReference type="InterPro" id="IPR013785">
    <property type="entry name" value="Aldolase_TIM"/>
</dbReference>
<dbReference type="InterPro" id="IPR011060">
    <property type="entry name" value="RibuloseP-bd_barrel"/>
</dbReference>
<dbReference type="InterPro" id="IPR018204">
    <property type="entry name" value="Trp_synthase_alpha_AS"/>
</dbReference>
<dbReference type="InterPro" id="IPR002028">
    <property type="entry name" value="Trp_synthase_suA"/>
</dbReference>
<dbReference type="NCBIfam" id="TIGR00262">
    <property type="entry name" value="trpA"/>
    <property type="match status" value="1"/>
</dbReference>
<dbReference type="PANTHER" id="PTHR43406:SF1">
    <property type="entry name" value="TRYPTOPHAN SYNTHASE ALPHA CHAIN, CHLOROPLASTIC"/>
    <property type="match status" value="1"/>
</dbReference>
<dbReference type="PANTHER" id="PTHR43406">
    <property type="entry name" value="TRYPTOPHAN SYNTHASE, ALPHA CHAIN"/>
    <property type="match status" value="1"/>
</dbReference>
<dbReference type="Pfam" id="PF00290">
    <property type="entry name" value="Trp_syntA"/>
    <property type="match status" value="1"/>
</dbReference>
<dbReference type="SUPFAM" id="SSF51366">
    <property type="entry name" value="Ribulose-phoshate binding barrel"/>
    <property type="match status" value="1"/>
</dbReference>
<dbReference type="PROSITE" id="PS00167">
    <property type="entry name" value="TRP_SYNTHASE_ALPHA"/>
    <property type="match status" value="1"/>
</dbReference>